<protein>
    <recommendedName>
        <fullName evidence="1">Large ribosomal subunit protein bL21</fullName>
    </recommendedName>
    <alternativeName>
        <fullName evidence="2">50S ribosomal protein L21</fullName>
    </alternativeName>
</protein>
<reference key="1">
    <citation type="journal article" date="2005" name="Nat. Biotechnol.">
        <title>Complete genome sequence of the acetic acid bacterium Gluconobacter oxydans.</title>
        <authorList>
            <person name="Prust C."/>
            <person name="Hoffmeister M."/>
            <person name="Liesegang H."/>
            <person name="Wiezer A."/>
            <person name="Fricke W.F."/>
            <person name="Ehrenreich A."/>
            <person name="Gottschalk G."/>
            <person name="Deppenmeier U."/>
        </authorList>
    </citation>
    <scope>NUCLEOTIDE SEQUENCE [LARGE SCALE GENOMIC DNA]</scope>
    <source>
        <strain>621H</strain>
    </source>
</reference>
<gene>
    <name evidence="1" type="primary">rplU</name>
    <name type="ordered locus">GOX0139</name>
</gene>
<organism>
    <name type="scientific">Gluconobacter oxydans (strain 621H)</name>
    <name type="common">Gluconobacter suboxydans</name>
    <dbReference type="NCBI Taxonomy" id="290633"/>
    <lineage>
        <taxon>Bacteria</taxon>
        <taxon>Pseudomonadati</taxon>
        <taxon>Pseudomonadota</taxon>
        <taxon>Alphaproteobacteria</taxon>
        <taxon>Acetobacterales</taxon>
        <taxon>Acetobacteraceae</taxon>
        <taxon>Gluconobacter</taxon>
    </lineage>
</organism>
<keyword id="KW-1185">Reference proteome</keyword>
<keyword id="KW-0687">Ribonucleoprotein</keyword>
<keyword id="KW-0689">Ribosomal protein</keyword>
<keyword id="KW-0694">RNA-binding</keyword>
<keyword id="KW-0699">rRNA-binding</keyword>
<accession>Q5FUL4</accession>
<name>RL21_GLUOX</name>
<feature type="chain" id="PRO_0000270671" description="Large ribosomal subunit protein bL21">
    <location>
        <begin position="1"/>
        <end position="104"/>
    </location>
</feature>
<dbReference type="EMBL" id="CP000009">
    <property type="protein sequence ID" value="AAW59932.1"/>
    <property type="molecule type" value="Genomic_DNA"/>
</dbReference>
<dbReference type="RefSeq" id="WP_011251736.1">
    <property type="nucleotide sequence ID" value="NZ_LT900338.1"/>
</dbReference>
<dbReference type="SMR" id="Q5FUL4"/>
<dbReference type="STRING" id="290633.GOX0139"/>
<dbReference type="GeneID" id="56904411"/>
<dbReference type="KEGG" id="gox:GOX0139"/>
<dbReference type="eggNOG" id="COG0261">
    <property type="taxonomic scope" value="Bacteria"/>
</dbReference>
<dbReference type="HOGENOM" id="CLU_061463_1_2_5"/>
<dbReference type="Proteomes" id="UP000006375">
    <property type="component" value="Chromosome"/>
</dbReference>
<dbReference type="GO" id="GO:0005737">
    <property type="term" value="C:cytoplasm"/>
    <property type="evidence" value="ECO:0007669"/>
    <property type="project" value="UniProtKB-ARBA"/>
</dbReference>
<dbReference type="GO" id="GO:1990904">
    <property type="term" value="C:ribonucleoprotein complex"/>
    <property type="evidence" value="ECO:0007669"/>
    <property type="project" value="UniProtKB-KW"/>
</dbReference>
<dbReference type="GO" id="GO:0005840">
    <property type="term" value="C:ribosome"/>
    <property type="evidence" value="ECO:0007669"/>
    <property type="project" value="UniProtKB-KW"/>
</dbReference>
<dbReference type="GO" id="GO:0019843">
    <property type="term" value="F:rRNA binding"/>
    <property type="evidence" value="ECO:0007669"/>
    <property type="project" value="UniProtKB-UniRule"/>
</dbReference>
<dbReference type="GO" id="GO:0003735">
    <property type="term" value="F:structural constituent of ribosome"/>
    <property type="evidence" value="ECO:0007669"/>
    <property type="project" value="InterPro"/>
</dbReference>
<dbReference type="GO" id="GO:0006412">
    <property type="term" value="P:translation"/>
    <property type="evidence" value="ECO:0007669"/>
    <property type="project" value="UniProtKB-UniRule"/>
</dbReference>
<dbReference type="HAMAP" id="MF_01363">
    <property type="entry name" value="Ribosomal_bL21"/>
    <property type="match status" value="1"/>
</dbReference>
<dbReference type="InterPro" id="IPR028909">
    <property type="entry name" value="bL21-like"/>
</dbReference>
<dbReference type="InterPro" id="IPR036164">
    <property type="entry name" value="bL21-like_sf"/>
</dbReference>
<dbReference type="InterPro" id="IPR001787">
    <property type="entry name" value="Ribosomal_bL21"/>
</dbReference>
<dbReference type="NCBIfam" id="TIGR00061">
    <property type="entry name" value="L21"/>
    <property type="match status" value="1"/>
</dbReference>
<dbReference type="PANTHER" id="PTHR21349">
    <property type="entry name" value="50S RIBOSOMAL PROTEIN L21"/>
    <property type="match status" value="1"/>
</dbReference>
<dbReference type="PANTHER" id="PTHR21349:SF0">
    <property type="entry name" value="LARGE RIBOSOMAL SUBUNIT PROTEIN BL21M"/>
    <property type="match status" value="1"/>
</dbReference>
<dbReference type="Pfam" id="PF00829">
    <property type="entry name" value="Ribosomal_L21p"/>
    <property type="match status" value="1"/>
</dbReference>
<dbReference type="SUPFAM" id="SSF141091">
    <property type="entry name" value="L21p-like"/>
    <property type="match status" value="1"/>
</dbReference>
<proteinExistence type="inferred from homology"/>
<comment type="function">
    <text evidence="1">This protein binds to 23S rRNA in the presence of protein L20.</text>
</comment>
<comment type="subunit">
    <text evidence="1">Part of the 50S ribosomal subunit. Contacts protein L20.</text>
</comment>
<comment type="similarity">
    <text evidence="1">Belongs to the bacterial ribosomal protein bL21 family.</text>
</comment>
<sequence length="104" mass="11242">MYAVIRTGGKQYRVAPESILKVEKLEAEAGSTITFTDVLMVGGEGTLTVGAPLVAGATVTATVVAQDRLPKVIIFKKRRRQNSRRKNGHRQPVTVLRINAINAA</sequence>
<evidence type="ECO:0000255" key="1">
    <source>
        <dbReference type="HAMAP-Rule" id="MF_01363"/>
    </source>
</evidence>
<evidence type="ECO:0000305" key="2"/>